<gene>
    <name evidence="1" type="primary">aspS</name>
    <name type="ordered locus">Dtpsy_0803</name>
</gene>
<sequence>MAMRSHYCGLVTEALLGQTVTLSGWVNRRRDHGGVIFIDLRDREGYVQVVCDPDRPEMFKVAEDVRNEFCVQVKGLVRARPEGTTNDSLKSGKIEVLCQELNVLNPSVTPPFQMDDDNLSETTRLTHRVMDLRRPYMQRNMMLRYKTAIQVRNFLDKEGFIDIETPMLGKSTPEGARDYLVPSRVHDGQFFALPQSPQLYKQMLMVAGYDRYYQITKCFRDEDLRADRQPEFTQIDCETSFLNEEEIRAIFQRMIKEVFQQQLGVDLGEFPTMTYQEAAHRFGSDKPDLRVKLEFTELTDVMKDVDFKVFSGAANMKGGRVVALRVPGGAREEGGLSRGEIDGYTEFVKIYGAKGLAYIKVNDKAKGRDGLQSPIVKNIHDAALAEVLQRTGAQDGDLLFFGADKEKIVNDAIGALRLKVGHSEFGKKNGLFENRWAPLWVVDFPMFEHDEEEDRWVAVHHPFTSPKDGHENLMDTDPGKCIAKAYDMVLNGWELGGGSVRIHRADVQAKVFAALNIGPEDQRAKFGYLLDALQYGAPPHGGLAFGLDRLITLMTGAESIRDVIAFPKTQRAQDLLTQAPSPVDEKQLRELHIRLRNPLPAAH</sequence>
<organism>
    <name type="scientific">Acidovorax ebreus (strain TPSY)</name>
    <name type="common">Diaphorobacter sp. (strain TPSY)</name>
    <dbReference type="NCBI Taxonomy" id="535289"/>
    <lineage>
        <taxon>Bacteria</taxon>
        <taxon>Pseudomonadati</taxon>
        <taxon>Pseudomonadota</taxon>
        <taxon>Betaproteobacteria</taxon>
        <taxon>Burkholderiales</taxon>
        <taxon>Comamonadaceae</taxon>
        <taxon>Diaphorobacter</taxon>
    </lineage>
</organism>
<name>SYDND_ACIET</name>
<feature type="chain" id="PRO_1000198980" description="Aspartate--tRNA(Asp/Asn) ligase">
    <location>
        <begin position="1"/>
        <end position="603"/>
    </location>
</feature>
<feature type="region of interest" description="Aspartate" evidence="1">
    <location>
        <begin position="198"/>
        <end position="201"/>
    </location>
</feature>
<feature type="binding site" evidence="1">
    <location>
        <position position="174"/>
    </location>
    <ligand>
        <name>L-aspartate</name>
        <dbReference type="ChEBI" id="CHEBI:29991"/>
    </ligand>
</feature>
<feature type="binding site" evidence="1">
    <location>
        <begin position="220"/>
        <end position="222"/>
    </location>
    <ligand>
        <name>ATP</name>
        <dbReference type="ChEBI" id="CHEBI:30616"/>
    </ligand>
</feature>
<feature type="binding site" evidence="1">
    <location>
        <position position="220"/>
    </location>
    <ligand>
        <name>L-aspartate</name>
        <dbReference type="ChEBI" id="CHEBI:29991"/>
    </ligand>
</feature>
<feature type="binding site" evidence="1">
    <location>
        <position position="229"/>
    </location>
    <ligand>
        <name>ATP</name>
        <dbReference type="ChEBI" id="CHEBI:30616"/>
    </ligand>
</feature>
<feature type="binding site" evidence="1">
    <location>
        <position position="460"/>
    </location>
    <ligand>
        <name>L-aspartate</name>
        <dbReference type="ChEBI" id="CHEBI:29991"/>
    </ligand>
</feature>
<feature type="binding site" evidence="1">
    <location>
        <position position="494"/>
    </location>
    <ligand>
        <name>ATP</name>
        <dbReference type="ChEBI" id="CHEBI:30616"/>
    </ligand>
</feature>
<feature type="binding site" evidence="1">
    <location>
        <position position="501"/>
    </location>
    <ligand>
        <name>L-aspartate</name>
        <dbReference type="ChEBI" id="CHEBI:29991"/>
    </ligand>
</feature>
<feature type="binding site" evidence="1">
    <location>
        <begin position="546"/>
        <end position="549"/>
    </location>
    <ligand>
        <name>ATP</name>
        <dbReference type="ChEBI" id="CHEBI:30616"/>
    </ligand>
</feature>
<feature type="site" description="Important for tRNA non-discrimination" evidence="1">
    <location>
        <position position="32"/>
    </location>
</feature>
<feature type="site" description="Important for tRNA non-discrimination" evidence="1">
    <location>
        <position position="83"/>
    </location>
</feature>
<evidence type="ECO:0000255" key="1">
    <source>
        <dbReference type="HAMAP-Rule" id="MF_00044"/>
    </source>
</evidence>
<reference key="1">
    <citation type="submission" date="2009-01" db="EMBL/GenBank/DDBJ databases">
        <title>Complete sequence of Diaphorobacter sp. TPSY.</title>
        <authorList>
            <consortium name="US DOE Joint Genome Institute"/>
            <person name="Lucas S."/>
            <person name="Copeland A."/>
            <person name="Lapidus A."/>
            <person name="Glavina del Rio T."/>
            <person name="Tice H."/>
            <person name="Bruce D."/>
            <person name="Goodwin L."/>
            <person name="Pitluck S."/>
            <person name="Chertkov O."/>
            <person name="Brettin T."/>
            <person name="Detter J.C."/>
            <person name="Han C."/>
            <person name="Larimer F."/>
            <person name="Land M."/>
            <person name="Hauser L."/>
            <person name="Kyrpides N."/>
            <person name="Mikhailova N."/>
            <person name="Coates J.D."/>
        </authorList>
    </citation>
    <scope>NUCLEOTIDE SEQUENCE [LARGE SCALE GENOMIC DNA]</scope>
    <source>
        <strain>TPSY</strain>
    </source>
</reference>
<accession>B9ME28</accession>
<proteinExistence type="inferred from homology"/>
<keyword id="KW-0030">Aminoacyl-tRNA synthetase</keyword>
<keyword id="KW-0067">ATP-binding</keyword>
<keyword id="KW-0963">Cytoplasm</keyword>
<keyword id="KW-0436">Ligase</keyword>
<keyword id="KW-0547">Nucleotide-binding</keyword>
<keyword id="KW-0648">Protein biosynthesis</keyword>
<keyword id="KW-1185">Reference proteome</keyword>
<comment type="function">
    <text evidence="1">Aspartyl-tRNA synthetase with relaxed tRNA specificity since it is able to aspartylate not only its cognate tRNA(Asp) but also tRNA(Asn). Reaction proceeds in two steps: L-aspartate is first activated by ATP to form Asp-AMP and then transferred to the acceptor end of tRNA(Asp/Asn).</text>
</comment>
<comment type="catalytic activity">
    <reaction evidence="1">
        <text>tRNA(Asx) + L-aspartate + ATP = L-aspartyl-tRNA(Asx) + AMP + diphosphate</text>
        <dbReference type="Rhea" id="RHEA:18349"/>
        <dbReference type="Rhea" id="RHEA-COMP:9710"/>
        <dbReference type="Rhea" id="RHEA-COMP:9711"/>
        <dbReference type="ChEBI" id="CHEBI:29991"/>
        <dbReference type="ChEBI" id="CHEBI:30616"/>
        <dbReference type="ChEBI" id="CHEBI:33019"/>
        <dbReference type="ChEBI" id="CHEBI:78442"/>
        <dbReference type="ChEBI" id="CHEBI:78516"/>
        <dbReference type="ChEBI" id="CHEBI:456215"/>
        <dbReference type="EC" id="6.1.1.23"/>
    </reaction>
</comment>
<comment type="subunit">
    <text evidence="1">Homodimer.</text>
</comment>
<comment type="subcellular location">
    <subcellularLocation>
        <location evidence="1">Cytoplasm</location>
    </subcellularLocation>
</comment>
<comment type="similarity">
    <text evidence="1">Belongs to the class-II aminoacyl-tRNA synthetase family. Type 1 subfamily.</text>
</comment>
<protein>
    <recommendedName>
        <fullName evidence="1">Aspartate--tRNA(Asp/Asn) ligase</fullName>
        <ecNumber evidence="1">6.1.1.23</ecNumber>
    </recommendedName>
    <alternativeName>
        <fullName evidence="1">Aspartyl-tRNA synthetase</fullName>
        <shortName evidence="1">AspRS</shortName>
    </alternativeName>
    <alternativeName>
        <fullName evidence="1">Non-discriminating aspartyl-tRNA synthetase</fullName>
        <shortName evidence="1">ND-AspRS</shortName>
    </alternativeName>
</protein>
<dbReference type="EC" id="6.1.1.23" evidence="1"/>
<dbReference type="EMBL" id="CP001392">
    <property type="protein sequence ID" value="ACM32282.1"/>
    <property type="molecule type" value="Genomic_DNA"/>
</dbReference>
<dbReference type="RefSeq" id="WP_011804318.1">
    <property type="nucleotide sequence ID" value="NC_011992.1"/>
</dbReference>
<dbReference type="SMR" id="B9ME28"/>
<dbReference type="KEGG" id="dia:Dtpsy_0803"/>
<dbReference type="eggNOG" id="COG0173">
    <property type="taxonomic scope" value="Bacteria"/>
</dbReference>
<dbReference type="HOGENOM" id="CLU_014330_3_2_4"/>
<dbReference type="Proteomes" id="UP000000450">
    <property type="component" value="Chromosome"/>
</dbReference>
<dbReference type="GO" id="GO:0005737">
    <property type="term" value="C:cytoplasm"/>
    <property type="evidence" value="ECO:0007669"/>
    <property type="project" value="UniProtKB-SubCell"/>
</dbReference>
<dbReference type="GO" id="GO:0004815">
    <property type="term" value="F:aspartate-tRNA ligase activity"/>
    <property type="evidence" value="ECO:0007669"/>
    <property type="project" value="UniProtKB-UniRule"/>
</dbReference>
<dbReference type="GO" id="GO:0050560">
    <property type="term" value="F:aspartate-tRNA(Asn) ligase activity"/>
    <property type="evidence" value="ECO:0007669"/>
    <property type="project" value="UniProtKB-EC"/>
</dbReference>
<dbReference type="GO" id="GO:0005524">
    <property type="term" value="F:ATP binding"/>
    <property type="evidence" value="ECO:0007669"/>
    <property type="project" value="UniProtKB-UniRule"/>
</dbReference>
<dbReference type="GO" id="GO:0003676">
    <property type="term" value="F:nucleic acid binding"/>
    <property type="evidence" value="ECO:0007669"/>
    <property type="project" value="InterPro"/>
</dbReference>
<dbReference type="GO" id="GO:0006422">
    <property type="term" value="P:aspartyl-tRNA aminoacylation"/>
    <property type="evidence" value="ECO:0007669"/>
    <property type="project" value="UniProtKB-UniRule"/>
</dbReference>
<dbReference type="CDD" id="cd00777">
    <property type="entry name" value="AspRS_core"/>
    <property type="match status" value="1"/>
</dbReference>
<dbReference type="CDD" id="cd04317">
    <property type="entry name" value="EcAspRS_like_N"/>
    <property type="match status" value="1"/>
</dbReference>
<dbReference type="Gene3D" id="3.30.930.10">
    <property type="entry name" value="Bira Bifunctional Protein, Domain 2"/>
    <property type="match status" value="1"/>
</dbReference>
<dbReference type="Gene3D" id="3.30.1360.30">
    <property type="entry name" value="GAD-like domain"/>
    <property type="match status" value="1"/>
</dbReference>
<dbReference type="Gene3D" id="2.40.50.140">
    <property type="entry name" value="Nucleic acid-binding proteins"/>
    <property type="match status" value="1"/>
</dbReference>
<dbReference type="HAMAP" id="MF_00044">
    <property type="entry name" value="Asp_tRNA_synth_type1"/>
    <property type="match status" value="1"/>
</dbReference>
<dbReference type="InterPro" id="IPR004364">
    <property type="entry name" value="Aa-tRNA-synt_II"/>
</dbReference>
<dbReference type="InterPro" id="IPR006195">
    <property type="entry name" value="aa-tRNA-synth_II"/>
</dbReference>
<dbReference type="InterPro" id="IPR045864">
    <property type="entry name" value="aa-tRNA-synth_II/BPL/LPL"/>
</dbReference>
<dbReference type="InterPro" id="IPR004524">
    <property type="entry name" value="Asp-tRNA-ligase_1"/>
</dbReference>
<dbReference type="InterPro" id="IPR047089">
    <property type="entry name" value="Asp-tRNA-ligase_1_N"/>
</dbReference>
<dbReference type="InterPro" id="IPR002312">
    <property type="entry name" value="Asp/Asn-tRNA-synth_IIb"/>
</dbReference>
<dbReference type="InterPro" id="IPR047090">
    <property type="entry name" value="AspRS_core"/>
</dbReference>
<dbReference type="InterPro" id="IPR004115">
    <property type="entry name" value="GAD-like_sf"/>
</dbReference>
<dbReference type="InterPro" id="IPR029351">
    <property type="entry name" value="GAD_dom"/>
</dbReference>
<dbReference type="InterPro" id="IPR012340">
    <property type="entry name" value="NA-bd_OB-fold"/>
</dbReference>
<dbReference type="InterPro" id="IPR004365">
    <property type="entry name" value="NA-bd_OB_tRNA"/>
</dbReference>
<dbReference type="NCBIfam" id="TIGR00459">
    <property type="entry name" value="aspS_bact"/>
    <property type="match status" value="1"/>
</dbReference>
<dbReference type="NCBIfam" id="NF001750">
    <property type="entry name" value="PRK00476.1"/>
    <property type="match status" value="1"/>
</dbReference>
<dbReference type="PANTHER" id="PTHR22594:SF5">
    <property type="entry name" value="ASPARTATE--TRNA LIGASE, MITOCHONDRIAL"/>
    <property type="match status" value="1"/>
</dbReference>
<dbReference type="PANTHER" id="PTHR22594">
    <property type="entry name" value="ASPARTYL/LYSYL-TRNA SYNTHETASE"/>
    <property type="match status" value="1"/>
</dbReference>
<dbReference type="Pfam" id="PF02938">
    <property type="entry name" value="GAD"/>
    <property type="match status" value="1"/>
</dbReference>
<dbReference type="Pfam" id="PF00152">
    <property type="entry name" value="tRNA-synt_2"/>
    <property type="match status" value="1"/>
</dbReference>
<dbReference type="Pfam" id="PF01336">
    <property type="entry name" value="tRNA_anti-codon"/>
    <property type="match status" value="1"/>
</dbReference>
<dbReference type="PRINTS" id="PR01042">
    <property type="entry name" value="TRNASYNTHASP"/>
</dbReference>
<dbReference type="SUPFAM" id="SSF55681">
    <property type="entry name" value="Class II aaRS and biotin synthetases"/>
    <property type="match status" value="1"/>
</dbReference>
<dbReference type="SUPFAM" id="SSF55261">
    <property type="entry name" value="GAD domain-like"/>
    <property type="match status" value="1"/>
</dbReference>
<dbReference type="SUPFAM" id="SSF50249">
    <property type="entry name" value="Nucleic acid-binding proteins"/>
    <property type="match status" value="1"/>
</dbReference>
<dbReference type="PROSITE" id="PS50862">
    <property type="entry name" value="AA_TRNA_LIGASE_II"/>
    <property type="match status" value="1"/>
</dbReference>